<gene>
    <name evidence="9" type="primary">LTPG16</name>
    <name evidence="8" type="synonym">EDA4</name>
    <name evidence="10" type="synonym">XYP6</name>
    <name evidence="12" type="ordered locus">At2g48140</name>
    <name evidence="13" type="ORF">F11L15.4</name>
</gene>
<name>LTG16_ARATH</name>
<sequence length="200" mass="20145">MEGLTLIVVMMSSFMLGGQGQQISTPCTSSMISTFTPCLNFITGSSGGSVTPTAGCCDSLKTLTNTGMGCACLILTANVPLPTGFINRTLALALPRACKMGGVPIQCQAAGTPLPAPGQVPFLIAPPPQVSAFSPGASKAAGTTPTQAPAPDTPADGPTGPTTKSGIRPVDQPMQPTGLAQSSTSPFLPLLFISLILLNL</sequence>
<keyword id="KW-1003">Cell membrane</keyword>
<keyword id="KW-1015">Disulfide bond</keyword>
<keyword id="KW-0325">Glycoprotein</keyword>
<keyword id="KW-0336">GPI-anchor</keyword>
<keyword id="KW-0449">Lipoprotein</keyword>
<keyword id="KW-0472">Membrane</keyword>
<keyword id="KW-1185">Reference proteome</keyword>
<keyword id="KW-0732">Signal</keyword>
<comment type="function">
    <text evidence="2 6">Essential protein involved in female gametophyte development (PubMed:15634699). Probable lipid transfer protein (By similarity).</text>
</comment>
<comment type="subcellular location">
    <subcellularLocation>
        <location evidence="3">Cell membrane</location>
        <topology evidence="3">Lipid-anchor</topology>
        <topology evidence="3">GPI-anchor</topology>
    </subcellularLocation>
</comment>
<comment type="tissue specificity">
    <text evidence="7">Expressed in seedlings, preferentially in hypocotyls and roots (PubMed:23893219). Also observed in siliques (PubMed:23893219).</text>
</comment>
<comment type="disruption phenotype">
    <text evidence="6">Female gametophyte disrupted development arrested at the four-nuclear stage.</text>
</comment>
<comment type="similarity">
    <text evidence="11">Belongs to the plant LTP family.</text>
</comment>
<organism>
    <name type="scientific">Arabidopsis thaliana</name>
    <name type="common">Mouse-ear cress</name>
    <dbReference type="NCBI Taxonomy" id="3702"/>
    <lineage>
        <taxon>Eukaryota</taxon>
        <taxon>Viridiplantae</taxon>
        <taxon>Streptophyta</taxon>
        <taxon>Embryophyta</taxon>
        <taxon>Tracheophyta</taxon>
        <taxon>Spermatophyta</taxon>
        <taxon>Magnoliopsida</taxon>
        <taxon>eudicotyledons</taxon>
        <taxon>Gunneridae</taxon>
        <taxon>Pentapetalae</taxon>
        <taxon>rosids</taxon>
        <taxon>malvids</taxon>
        <taxon>Brassicales</taxon>
        <taxon>Brassicaceae</taxon>
        <taxon>Camelineae</taxon>
        <taxon>Arabidopsis</taxon>
    </lineage>
</organism>
<dbReference type="EMBL" id="AB246325">
    <property type="protein sequence ID" value="BAE73262.1"/>
    <property type="molecule type" value="mRNA"/>
</dbReference>
<dbReference type="EMBL" id="LR782543">
    <property type="status" value="NOT_ANNOTATED_CDS"/>
    <property type="molecule type" value="Genomic_DNA"/>
</dbReference>
<dbReference type="EMBL" id="CP002685">
    <property type="protein sequence ID" value="AEC10944.1"/>
    <property type="molecule type" value="Genomic_DNA"/>
</dbReference>
<dbReference type="EMBL" id="AY045643">
    <property type="protein sequence ID" value="AAK74001.1"/>
    <property type="molecule type" value="mRNA"/>
</dbReference>
<dbReference type="EMBL" id="AY059652">
    <property type="protein sequence ID" value="AAL31145.1"/>
    <property type="molecule type" value="mRNA"/>
</dbReference>
<dbReference type="EMBL" id="AY088054">
    <property type="protein sequence ID" value="AAM65600.1"/>
    <property type="molecule type" value="mRNA"/>
</dbReference>
<dbReference type="RefSeq" id="NP_566127.1">
    <property type="nucleotide sequence ID" value="NM_130381.3"/>
</dbReference>
<dbReference type="FunCoup" id="Q94AX3">
    <property type="interactions" value="44"/>
</dbReference>
<dbReference type="STRING" id="3702.Q94AX3"/>
<dbReference type="GlyCosmos" id="Q94AX3">
    <property type="glycosylation" value="1 site, No reported glycans"/>
</dbReference>
<dbReference type="GlyGen" id="Q94AX3">
    <property type="glycosylation" value="3 sites"/>
</dbReference>
<dbReference type="PaxDb" id="3702-AT2G48140.1"/>
<dbReference type="ProteomicsDB" id="187459"/>
<dbReference type="EnsemblPlants" id="AT2G48140.1">
    <property type="protein sequence ID" value="AT2G48140.1"/>
    <property type="gene ID" value="AT2G48140"/>
</dbReference>
<dbReference type="GeneID" id="819426"/>
<dbReference type="Gramene" id="AT2G48140.1">
    <property type="protein sequence ID" value="AT2G48140.1"/>
    <property type="gene ID" value="AT2G48140"/>
</dbReference>
<dbReference type="KEGG" id="ath:AT2G48140"/>
<dbReference type="Araport" id="AT2G48140"/>
<dbReference type="TAIR" id="AT2G48140">
    <property type="gene designation" value="EDA4"/>
</dbReference>
<dbReference type="eggNOG" id="ENOG502RZXE">
    <property type="taxonomic scope" value="Eukaryota"/>
</dbReference>
<dbReference type="HOGENOM" id="CLU_085549_2_0_1"/>
<dbReference type="InParanoid" id="Q94AX3"/>
<dbReference type="OMA" id="CACLVIT"/>
<dbReference type="OrthoDB" id="1914452at2759"/>
<dbReference type="PhylomeDB" id="Q94AX3"/>
<dbReference type="PRO" id="PR:Q94AX3"/>
<dbReference type="Proteomes" id="UP000006548">
    <property type="component" value="Chromosome 2"/>
</dbReference>
<dbReference type="ExpressionAtlas" id="Q94AX3">
    <property type="expression patterns" value="baseline and differential"/>
</dbReference>
<dbReference type="GO" id="GO:0005886">
    <property type="term" value="C:plasma membrane"/>
    <property type="evidence" value="ECO:0007669"/>
    <property type="project" value="UniProtKB-SubCell"/>
</dbReference>
<dbReference type="GO" id="GO:0098552">
    <property type="term" value="C:side of membrane"/>
    <property type="evidence" value="ECO:0007669"/>
    <property type="project" value="UniProtKB-KW"/>
</dbReference>
<dbReference type="GO" id="GO:0009561">
    <property type="term" value="P:megagametogenesis"/>
    <property type="evidence" value="ECO:0000315"/>
    <property type="project" value="TAIR"/>
</dbReference>
<dbReference type="CDD" id="cd00010">
    <property type="entry name" value="AAI_LTSS"/>
    <property type="match status" value="1"/>
</dbReference>
<dbReference type="FunFam" id="1.10.110.10:FF:000001">
    <property type="entry name" value="Bifunctional inhibitor/lipid-transfer protein/seed storage 2S albumin superfamily protein"/>
    <property type="match status" value="1"/>
</dbReference>
<dbReference type="Gene3D" id="1.10.110.10">
    <property type="entry name" value="Plant lipid-transfer and hydrophobic proteins"/>
    <property type="match status" value="1"/>
</dbReference>
<dbReference type="InterPro" id="IPR036312">
    <property type="entry name" value="Bifun_inhib/LTP/seed_sf"/>
</dbReference>
<dbReference type="InterPro" id="IPR016140">
    <property type="entry name" value="Bifunc_inhib/LTP/seed_store"/>
</dbReference>
<dbReference type="InterPro" id="IPR043325">
    <property type="entry name" value="LTSS"/>
</dbReference>
<dbReference type="PANTHER" id="PTHR33044">
    <property type="entry name" value="BIFUNCTIONAL INHIBITOR/LIPID-TRANSFER PROTEIN/SEED STORAGE 2S ALBUMIN SUPERFAMILY PROTEIN-RELATED"/>
    <property type="match status" value="1"/>
</dbReference>
<dbReference type="Pfam" id="PF14368">
    <property type="entry name" value="LTP_2"/>
    <property type="match status" value="1"/>
</dbReference>
<dbReference type="SMART" id="SM00499">
    <property type="entry name" value="AAI"/>
    <property type="match status" value="1"/>
</dbReference>
<dbReference type="SUPFAM" id="SSF47699">
    <property type="entry name" value="Bifunctional inhibitor/lipid-transfer protein/seed storage 2S albumin"/>
    <property type="match status" value="1"/>
</dbReference>
<proteinExistence type="evidence at transcript level"/>
<protein>
    <recommendedName>
        <fullName evidence="9">Non-specific lipid transfer protein GPI-anchored 16</fullName>
        <shortName evidence="9">AtLTPG-16</shortName>
        <shortName evidence="9">Protein LTP-GPI-ANCHORED 16</shortName>
    </recommendedName>
    <alternativeName>
        <fullName evidence="8">Protein EMBRYO SAC DEVELOPMENT ARREST 4</fullName>
    </alternativeName>
    <alternativeName>
        <fullName evidence="10">Xylogen like protein 6</fullName>
        <shortName evidence="10">AtXYP6</shortName>
    </alternativeName>
</protein>
<accession>Q94AX3</accession>
<reference key="1">
    <citation type="submission" date="2006-01" db="EMBL/GenBank/DDBJ databases">
        <title>Xylogen family genes, involved in cell-cell communication in Arabidopsis.</title>
        <authorList>
            <person name="Kobayashi Y."/>
            <person name="Sawa S."/>
            <person name="Iwamoto K."/>
            <person name="Motose H."/>
            <person name="Fukuda H."/>
        </authorList>
    </citation>
    <scope>NUCLEOTIDE SEQUENCE [MRNA]</scope>
</reference>
<reference key="2">
    <citation type="journal article" date="1999" name="Nature">
        <title>Sequence and analysis of chromosome 2 of the plant Arabidopsis thaliana.</title>
        <authorList>
            <person name="Lin X."/>
            <person name="Kaul S."/>
            <person name="Rounsley S.D."/>
            <person name="Shea T.P."/>
            <person name="Benito M.-I."/>
            <person name="Town C.D."/>
            <person name="Fujii C.Y."/>
            <person name="Mason T.M."/>
            <person name="Bowman C.L."/>
            <person name="Barnstead M.E."/>
            <person name="Feldblyum T.V."/>
            <person name="Buell C.R."/>
            <person name="Ketchum K.A."/>
            <person name="Lee J.J."/>
            <person name="Ronning C.M."/>
            <person name="Koo H.L."/>
            <person name="Moffat K.S."/>
            <person name="Cronin L.A."/>
            <person name="Shen M."/>
            <person name="Pai G."/>
            <person name="Van Aken S."/>
            <person name="Umayam L."/>
            <person name="Tallon L.J."/>
            <person name="Gill J.E."/>
            <person name="Adams M.D."/>
            <person name="Carrera A.J."/>
            <person name="Creasy T.H."/>
            <person name="Goodman H.M."/>
            <person name="Somerville C.R."/>
            <person name="Copenhaver G.P."/>
            <person name="Preuss D."/>
            <person name="Nierman W.C."/>
            <person name="White O."/>
            <person name="Eisen J.A."/>
            <person name="Salzberg S.L."/>
            <person name="Fraser C.M."/>
            <person name="Venter J.C."/>
        </authorList>
    </citation>
    <scope>NUCLEOTIDE SEQUENCE [LARGE SCALE GENOMIC DNA]</scope>
    <source>
        <strain>cv. Columbia</strain>
    </source>
</reference>
<reference key="3">
    <citation type="journal article" date="2017" name="Plant J.">
        <title>Araport11: a complete reannotation of the Arabidopsis thaliana reference genome.</title>
        <authorList>
            <person name="Cheng C.Y."/>
            <person name="Krishnakumar V."/>
            <person name="Chan A.P."/>
            <person name="Thibaud-Nissen F."/>
            <person name="Schobel S."/>
            <person name="Town C.D."/>
        </authorList>
    </citation>
    <scope>GENOME REANNOTATION</scope>
    <source>
        <strain>cv. Columbia</strain>
    </source>
</reference>
<reference key="4">
    <citation type="journal article" date="2003" name="Science">
        <title>Empirical analysis of transcriptional activity in the Arabidopsis genome.</title>
        <authorList>
            <person name="Yamada K."/>
            <person name="Lim J."/>
            <person name="Dale J.M."/>
            <person name="Chen H."/>
            <person name="Shinn P."/>
            <person name="Palm C.J."/>
            <person name="Southwick A.M."/>
            <person name="Wu H.C."/>
            <person name="Kim C.J."/>
            <person name="Nguyen M."/>
            <person name="Pham P.K."/>
            <person name="Cheuk R.F."/>
            <person name="Karlin-Newmann G."/>
            <person name="Liu S.X."/>
            <person name="Lam B."/>
            <person name="Sakano H."/>
            <person name="Wu T."/>
            <person name="Yu G."/>
            <person name="Miranda M."/>
            <person name="Quach H.L."/>
            <person name="Tripp M."/>
            <person name="Chang C.H."/>
            <person name="Lee J.M."/>
            <person name="Toriumi M.J."/>
            <person name="Chan M.M."/>
            <person name="Tang C.C."/>
            <person name="Onodera C.S."/>
            <person name="Deng J.M."/>
            <person name="Akiyama K."/>
            <person name="Ansari Y."/>
            <person name="Arakawa T."/>
            <person name="Banh J."/>
            <person name="Banno F."/>
            <person name="Bowser L."/>
            <person name="Brooks S.Y."/>
            <person name="Carninci P."/>
            <person name="Chao Q."/>
            <person name="Choy N."/>
            <person name="Enju A."/>
            <person name="Goldsmith A.D."/>
            <person name="Gurjal M."/>
            <person name="Hansen N.F."/>
            <person name="Hayashizaki Y."/>
            <person name="Johnson-Hopson C."/>
            <person name="Hsuan V.W."/>
            <person name="Iida K."/>
            <person name="Karnes M."/>
            <person name="Khan S."/>
            <person name="Koesema E."/>
            <person name="Ishida J."/>
            <person name="Jiang P.X."/>
            <person name="Jones T."/>
            <person name="Kawai J."/>
            <person name="Kamiya A."/>
            <person name="Meyers C."/>
            <person name="Nakajima M."/>
            <person name="Narusaka M."/>
            <person name="Seki M."/>
            <person name="Sakurai T."/>
            <person name="Satou M."/>
            <person name="Tamse R."/>
            <person name="Vaysberg M."/>
            <person name="Wallender E.K."/>
            <person name="Wong C."/>
            <person name="Yamamura Y."/>
            <person name="Yuan S."/>
            <person name="Shinozaki K."/>
            <person name="Davis R.W."/>
            <person name="Theologis A."/>
            <person name="Ecker J.R."/>
        </authorList>
    </citation>
    <scope>NUCLEOTIDE SEQUENCE [LARGE SCALE MRNA]</scope>
    <source>
        <strain>cv. Columbia</strain>
    </source>
</reference>
<reference key="5">
    <citation type="submission" date="2002-03" db="EMBL/GenBank/DDBJ databases">
        <title>Full-length cDNA from Arabidopsis thaliana.</title>
        <authorList>
            <person name="Brover V.V."/>
            <person name="Troukhan M.E."/>
            <person name="Alexandrov N.A."/>
            <person name="Lu Y.-P."/>
            <person name="Flavell R.B."/>
            <person name="Feldmann K.A."/>
        </authorList>
    </citation>
    <scope>NUCLEOTIDE SEQUENCE [LARGE SCALE MRNA]</scope>
</reference>
<reference key="6">
    <citation type="journal article" date="2005" name="Development">
        <title>Genetic and molecular identification of genes required for female gametophyte development and function in Arabidopsis.</title>
        <authorList>
            <person name="Pagnussat G.C."/>
            <person name="Yu H.-J."/>
            <person name="Ngo Q.A."/>
            <person name="Rajani S."/>
            <person name="Mayalagu S."/>
            <person name="Johnson C.S."/>
            <person name="Capron A."/>
            <person name="Xie L.-F."/>
            <person name="Ye D."/>
            <person name="Sundaresan V."/>
        </authorList>
    </citation>
    <scope>FUNCTION</scope>
    <scope>DISRUPTION PHENOTYPE</scope>
</reference>
<reference key="7">
    <citation type="journal article" date="2013" name="Plant Mol. Biol.">
        <title>Coexpression patterns indicate that GPI-anchored non-specific lipid transfer proteins are involved in accumulation of cuticular wax, suberin and sporopollenin.</title>
        <authorList>
            <person name="Edstam M.M."/>
            <person name="Blomqvist K."/>
            <person name="Ekloef A."/>
            <person name="Wennergren U."/>
            <person name="Edqvist J."/>
        </authorList>
    </citation>
    <scope>TISSUE SPECIFICITY</scope>
    <scope>GENE FAMILY</scope>
    <scope>NOMENCLATURE</scope>
    <source>
        <strain>cv. Columbia</strain>
    </source>
</reference>
<evidence type="ECO:0000250" key="1">
    <source>
        <dbReference type="UniProtKB" id="A0A0B4JDK1"/>
    </source>
</evidence>
<evidence type="ECO:0000250" key="2">
    <source>
        <dbReference type="UniProtKB" id="Q9C7F7"/>
    </source>
</evidence>
<evidence type="ECO:0000255" key="3"/>
<evidence type="ECO:0000255" key="4">
    <source>
        <dbReference type="PROSITE-ProRule" id="PRU00498"/>
    </source>
</evidence>
<evidence type="ECO:0000256" key="5">
    <source>
        <dbReference type="SAM" id="MobiDB-lite"/>
    </source>
</evidence>
<evidence type="ECO:0000269" key="6">
    <source>
    </source>
</evidence>
<evidence type="ECO:0000269" key="7">
    <source>
    </source>
</evidence>
<evidence type="ECO:0000303" key="8">
    <source>
    </source>
</evidence>
<evidence type="ECO:0000303" key="9">
    <source>
    </source>
</evidence>
<evidence type="ECO:0000303" key="10">
    <source ref="1"/>
</evidence>
<evidence type="ECO:0000305" key="11"/>
<evidence type="ECO:0000312" key="12">
    <source>
        <dbReference type="Araport" id="AT2G48140"/>
    </source>
</evidence>
<evidence type="ECO:0000312" key="13">
    <source>
        <dbReference type="EMBL" id="AEC10944.1"/>
    </source>
</evidence>
<feature type="signal peptide" evidence="3">
    <location>
        <begin position="1"/>
        <end position="20"/>
    </location>
</feature>
<feature type="chain" id="PRO_5014312520" description="Non-specific lipid transfer protein GPI-anchored 16">
    <location>
        <begin position="21"/>
        <end position="177"/>
    </location>
</feature>
<feature type="propeptide" id="PRO_0000451647" description="Removed in mature form" evidence="3">
    <location>
        <begin position="178"/>
        <end position="200"/>
    </location>
</feature>
<feature type="region of interest" description="Disordered" evidence="5">
    <location>
        <begin position="134"/>
        <end position="182"/>
    </location>
</feature>
<feature type="compositionally biased region" description="Low complexity" evidence="5">
    <location>
        <begin position="140"/>
        <end position="163"/>
    </location>
</feature>
<feature type="lipid moiety-binding region" description="GPI-anchor amidated threonine" evidence="3">
    <location>
        <position position="177"/>
    </location>
</feature>
<feature type="glycosylation site" description="N-linked (GlcNAc...) asparagine" evidence="4">
    <location>
        <position position="87"/>
    </location>
</feature>
<feature type="disulfide bond" evidence="1">
    <location>
        <begin position="27"/>
        <end position="72"/>
    </location>
</feature>
<feature type="disulfide bond" evidence="1">
    <location>
        <begin position="38"/>
        <end position="56"/>
    </location>
</feature>
<feature type="disulfide bond" evidence="1">
    <location>
        <begin position="57"/>
        <end position="98"/>
    </location>
</feature>
<feature type="disulfide bond" evidence="1">
    <location>
        <begin position="70"/>
        <end position="107"/>
    </location>
</feature>